<comment type="function">
    <text evidence="3">Dual specificity isomerase that catalyzes the isomerization of both glucose-6-phosphate and mannose-6-phosphate to fructose-6-phosphate with similar catalytic efficiency.</text>
</comment>
<comment type="catalytic activity">
    <reaction evidence="3">
        <text>alpha-D-glucose 6-phosphate = beta-D-fructose 6-phosphate</text>
        <dbReference type="Rhea" id="RHEA:11816"/>
        <dbReference type="ChEBI" id="CHEBI:57634"/>
        <dbReference type="ChEBI" id="CHEBI:58225"/>
        <dbReference type="EC" id="5.3.1.9"/>
    </reaction>
</comment>
<comment type="catalytic activity">
    <reaction evidence="3">
        <text>D-mannose 6-phosphate = D-fructose 6-phosphate</text>
        <dbReference type="Rhea" id="RHEA:12356"/>
        <dbReference type="ChEBI" id="CHEBI:58735"/>
        <dbReference type="ChEBI" id="CHEBI:61527"/>
        <dbReference type="EC" id="5.3.1.8"/>
    </reaction>
</comment>
<comment type="activity regulation">
    <text evidence="3">Inhibited by low concentrations of erythrose 4-phosphate and 6-phosphogluconate.</text>
</comment>
<comment type="biophysicochemical properties">
    <kinetics>
        <KM evidence="3">3.5 mM for glucose 6-phosphate</KM>
        <KM evidence="3">0.44 mM for fructose 6-phosphate</KM>
        <KM evidence="3">1.1 mM for mannose 6-phosphate</KM>
        <Vmax evidence="3">226.0 mmol/min/mg enzyme with glucose 6-phosphate as substrate (at 80 degrees Celsius)</Vmax>
        <Vmax evidence="3">195.0 mmol/min/mg enzyme with fructose 6-phosphate as substrate (at 80 degrees Celsius)</Vmax>
        <Vmax evidence="3">209.0 mmol/min/mg enzyme with mannose 6-phosphate as substrate (at 80 degrees Celsius)</Vmax>
    </kinetics>
    <phDependence>
        <text evidence="3">Optimum pH is 7.6.</text>
    </phDependence>
    <temperatureDependence>
        <text evidence="3">Optimum temperature is above 98 degrees Celsius.</text>
    </temperatureDependence>
</comment>
<comment type="subunit">
    <text evidence="3">Homodimer.</text>
</comment>
<comment type="similarity">
    <text evidence="5">Belongs to the PGI/PMI family.</text>
</comment>
<feature type="chain" id="PRO_0000227544" description="Bifunctional phosphoglucose/phosphomannose isomerase">
    <location>
        <begin position="1"/>
        <end position="333"/>
    </location>
</feature>
<feature type="domain" description="SIS" evidence="2">
    <location>
        <begin position="22"/>
        <end position="160"/>
    </location>
</feature>
<feature type="active site" description="Proton acceptor" evidence="1">
    <location>
        <position position="211"/>
    </location>
</feature>
<feature type="active site" description="Proton donor" evidence="1">
    <location>
        <position position="227"/>
    </location>
</feature>
<feature type="active site" description="Proton acceptor" evidence="1">
    <location>
        <position position="322"/>
    </location>
</feature>
<feature type="binding site" evidence="1">
    <location>
        <position position="39"/>
    </location>
    <ligand>
        <name>D-fructose 6-phosphate</name>
        <dbReference type="ChEBI" id="CHEBI:61527"/>
    </ligand>
</feature>
<feature type="binding site" evidence="1">
    <location>
        <position position="40"/>
    </location>
    <ligand>
        <name>D-fructose 6-phosphate</name>
        <dbReference type="ChEBI" id="CHEBI:61527"/>
    </ligand>
</feature>
<feature type="binding site" evidence="1">
    <location>
        <position position="84"/>
    </location>
    <ligand>
        <name>D-fructose 6-phosphate</name>
        <dbReference type="ChEBI" id="CHEBI:61527"/>
    </ligand>
</feature>
<feature type="binding site" evidence="1">
    <location>
        <position position="86"/>
    </location>
    <ligand>
        <name>D-fructose 6-phosphate</name>
        <dbReference type="ChEBI" id="CHEBI:61527"/>
    </ligand>
</feature>
<feature type="binding site" evidence="1">
    <location>
        <position position="89"/>
    </location>
    <ligand>
        <name>D-fructose 6-phosphate</name>
        <dbReference type="ChEBI" id="CHEBI:61527"/>
    </ligand>
</feature>
<feature type="binding site" evidence="1">
    <location>
        <position position="136"/>
    </location>
    <ligand>
        <name>D-fructose 6-phosphate</name>
        <dbReference type="ChEBI" id="CHEBI:61527"/>
    </ligand>
</feature>
<feature type="binding site" evidence="1">
    <location>
        <position position="227"/>
    </location>
    <ligand>
        <name>D-fructose 6-phosphate</name>
        <dbReference type="ChEBI" id="CHEBI:61527"/>
    </ligand>
</feature>
<feature type="binding site" evidence="1">
    <location>
        <position position="322"/>
    </location>
    <ligand>
        <name>D-fructose 6-phosphate</name>
        <dbReference type="ChEBI" id="CHEBI:61527"/>
    </ligand>
</feature>
<sequence length="333" mass="35942">MEDLYLSWPKWFSEALARYSSLEGALEGVEEIYYCGMGGSGAAGDYIEALLSIYAPQGPEFRVVKDFRPPRPPRHRGYGLVLASYSGNTLETVECGSLLSPAAGRVVAVTSGGRLLEMAKERGWLVARLPGGILPRVSFPWMLAASTAMLSGALGVDLEALKRLAGGLDTQGLKGEAERLAGFISRYRIASLVTCGPGIPLAVRLKNELAENAKMPSRLEIYPESSHNDIVALEAAEGLYGAVFIWIEHEGSLCPAVLDVVEGIYREYGVDTISIESSARGGPNATVAEYLSRTLVFGLASVRLALMRGFNPEETPPIDKYKRRLGEALRSQA</sequence>
<protein>
    <recommendedName>
        <fullName evidence="4">Bifunctional phosphoglucose/phosphomannose isomerase</fullName>
        <shortName evidence="4">Bifunctional PGI/PMI</shortName>
        <ecNumber evidence="3">5.3.1.8</ecNumber>
        <ecNumber evidence="3">5.3.1.9</ecNumber>
    </recommendedName>
    <alternativeName>
        <fullName>Glucose-6-phosphate isomerase</fullName>
        <shortName>GPI</shortName>
    </alternativeName>
    <alternativeName>
        <fullName>Mannose-6-phosphate isomerase</fullName>
    </alternativeName>
</protein>
<dbReference type="EC" id="5.3.1.8" evidence="3"/>
<dbReference type="EC" id="5.3.1.9" evidence="3"/>
<dbReference type="EMBL" id="BA000002">
    <property type="protein sequence ID" value="BAA79746.2"/>
    <property type="molecule type" value="Genomic_DNA"/>
</dbReference>
<dbReference type="PIR" id="B72668">
    <property type="entry name" value="B72668"/>
</dbReference>
<dbReference type="SMR" id="Q9YE01"/>
<dbReference type="STRING" id="272557.APE_0768.1"/>
<dbReference type="EnsemblBacteria" id="BAA79746">
    <property type="protein sequence ID" value="BAA79746"/>
    <property type="gene ID" value="APE_0768.1"/>
</dbReference>
<dbReference type="KEGG" id="ape:APE_0768.1"/>
<dbReference type="eggNOG" id="arCOG00052">
    <property type="taxonomic scope" value="Archaea"/>
</dbReference>
<dbReference type="BRENDA" id="5.3.1.8">
    <property type="organism ID" value="171"/>
</dbReference>
<dbReference type="BRENDA" id="5.3.1.9">
    <property type="organism ID" value="171"/>
</dbReference>
<dbReference type="SABIO-RK" id="Q9YE01"/>
<dbReference type="Proteomes" id="UP000002518">
    <property type="component" value="Chromosome"/>
</dbReference>
<dbReference type="GO" id="GO:0097367">
    <property type="term" value="F:carbohydrate derivative binding"/>
    <property type="evidence" value="ECO:0007669"/>
    <property type="project" value="InterPro"/>
</dbReference>
<dbReference type="GO" id="GO:0004347">
    <property type="term" value="F:glucose-6-phosphate isomerase activity"/>
    <property type="evidence" value="ECO:0007669"/>
    <property type="project" value="UniProtKB-EC"/>
</dbReference>
<dbReference type="GO" id="GO:0004476">
    <property type="term" value="F:mannose-6-phosphate isomerase activity"/>
    <property type="evidence" value="ECO:0007669"/>
    <property type="project" value="UniProtKB-EC"/>
</dbReference>
<dbReference type="GO" id="GO:1901135">
    <property type="term" value="P:carbohydrate derivative metabolic process"/>
    <property type="evidence" value="ECO:0007669"/>
    <property type="project" value="InterPro"/>
</dbReference>
<dbReference type="GO" id="GO:0005975">
    <property type="term" value="P:carbohydrate metabolic process"/>
    <property type="evidence" value="ECO:0007669"/>
    <property type="project" value="InterPro"/>
</dbReference>
<dbReference type="CDD" id="cd05017">
    <property type="entry name" value="SIS_PGI_PMI_1"/>
    <property type="match status" value="1"/>
</dbReference>
<dbReference type="CDD" id="cd05637">
    <property type="entry name" value="SIS_PGI_PMI_2"/>
    <property type="match status" value="1"/>
</dbReference>
<dbReference type="Gene3D" id="3.40.50.10490">
    <property type="entry name" value="Glucose-6-phosphate isomerase like protein, domain 1"/>
    <property type="match status" value="2"/>
</dbReference>
<dbReference type="InterPro" id="IPR019490">
    <property type="entry name" value="Glu6P/Mann6P_isomerase_C"/>
</dbReference>
<dbReference type="InterPro" id="IPR001347">
    <property type="entry name" value="SIS_dom"/>
</dbReference>
<dbReference type="InterPro" id="IPR046348">
    <property type="entry name" value="SIS_dom_sf"/>
</dbReference>
<dbReference type="InterPro" id="IPR035484">
    <property type="entry name" value="SIS_PGI/PMI_1"/>
</dbReference>
<dbReference type="NCBIfam" id="TIGR02128">
    <property type="entry name" value="G6PI_arch"/>
    <property type="match status" value="1"/>
</dbReference>
<dbReference type="NCBIfam" id="NF006422">
    <property type="entry name" value="PRK08674.1-1"/>
    <property type="match status" value="1"/>
</dbReference>
<dbReference type="Pfam" id="PF10432">
    <property type="entry name" value="bact-PGI_C"/>
    <property type="match status" value="1"/>
</dbReference>
<dbReference type="SUPFAM" id="SSF53697">
    <property type="entry name" value="SIS domain"/>
    <property type="match status" value="1"/>
</dbReference>
<dbReference type="PROSITE" id="PS51464">
    <property type="entry name" value="SIS"/>
    <property type="match status" value="1"/>
</dbReference>
<proteinExistence type="evidence at protein level"/>
<accession>Q9YE01</accession>
<reference key="1">
    <citation type="journal article" date="1999" name="DNA Res.">
        <title>Complete genome sequence of an aerobic hyper-thermophilic crenarchaeon, Aeropyrum pernix K1.</title>
        <authorList>
            <person name="Kawarabayasi Y."/>
            <person name="Hino Y."/>
            <person name="Horikawa H."/>
            <person name="Yamazaki S."/>
            <person name="Haikawa Y."/>
            <person name="Jin-no K."/>
            <person name="Takahashi M."/>
            <person name="Sekine M."/>
            <person name="Baba S."/>
            <person name="Ankai A."/>
            <person name="Kosugi H."/>
            <person name="Hosoyama A."/>
            <person name="Fukui S."/>
            <person name="Nagai Y."/>
            <person name="Nishijima K."/>
            <person name="Nakazawa H."/>
            <person name="Takamiya M."/>
            <person name="Masuda S."/>
            <person name="Funahashi T."/>
            <person name="Tanaka T."/>
            <person name="Kudoh Y."/>
            <person name="Yamazaki J."/>
            <person name="Kushida N."/>
            <person name="Oguchi A."/>
            <person name="Aoki K."/>
            <person name="Kubota K."/>
            <person name="Nakamura Y."/>
            <person name="Nomura N."/>
            <person name="Sako Y."/>
            <person name="Kikuchi H."/>
        </authorList>
    </citation>
    <scope>NUCLEOTIDE SEQUENCE [LARGE SCALE GENOMIC DNA]</scope>
    <source>
        <strain>ATCC 700893 / DSM 11879 / JCM 9820 / NBRC 100138 / K1</strain>
    </source>
</reference>
<reference key="2">
    <citation type="journal article" date="2004" name="J. Biol. Chem.">
        <title>Bifunctional phosphoglucose/phosphomannose isomerases from the archaea Aeropyrum pernix and Thermoplasma acidophilum constitute a novel enzyme family within the phosphoglucose isomerase superfamily.</title>
        <authorList>
            <person name="Hansen T."/>
            <person name="Wendor ff D."/>
            <person name="Schoenheit P."/>
        </authorList>
    </citation>
    <scope>FUNCTION</scope>
    <scope>CATALYTIC ACTIVITY</scope>
    <scope>ACTIVITY REGULATION</scope>
    <scope>BIOPHYSICOCHEMICAL PROPERTIES</scope>
    <scope>SUBUNIT</scope>
    <source>
        <strain>ATCC 700893 / DSM 11879 / JCM 9820 / NBRC 100138 / K1</strain>
    </source>
</reference>
<name>PGMI_AERPE</name>
<organism>
    <name type="scientific">Aeropyrum pernix (strain ATCC 700893 / DSM 11879 / JCM 9820 / NBRC 100138 / K1)</name>
    <dbReference type="NCBI Taxonomy" id="272557"/>
    <lineage>
        <taxon>Archaea</taxon>
        <taxon>Thermoproteota</taxon>
        <taxon>Thermoprotei</taxon>
        <taxon>Desulfurococcales</taxon>
        <taxon>Desulfurococcaceae</taxon>
        <taxon>Aeropyrum</taxon>
    </lineage>
</organism>
<gene>
    <name evidence="4" type="primary">pgi/pmi</name>
    <name type="ordered locus">APE_0768.1</name>
</gene>
<evidence type="ECO:0000250" key="1">
    <source>
        <dbReference type="UniProtKB" id="Q8ZWV0"/>
    </source>
</evidence>
<evidence type="ECO:0000255" key="2">
    <source>
        <dbReference type="PROSITE-ProRule" id="PRU00797"/>
    </source>
</evidence>
<evidence type="ECO:0000269" key="3">
    <source>
    </source>
</evidence>
<evidence type="ECO:0000303" key="4">
    <source>
    </source>
</evidence>
<evidence type="ECO:0000305" key="5"/>
<keyword id="KW-0119">Carbohydrate metabolism</keyword>
<keyword id="KW-0413">Isomerase</keyword>
<keyword id="KW-1185">Reference proteome</keyword>